<reference key="1">
    <citation type="journal article" date="2004" name="Proc. Natl. Acad. Sci. U.S.A.">
        <title>The louse-borne human pathogen Bartonella quintana is a genomic derivative of the zoonotic agent Bartonella henselae.</title>
        <authorList>
            <person name="Alsmark U.C.M."/>
            <person name="Frank A.C."/>
            <person name="Karlberg E.O."/>
            <person name="Legault B.-A."/>
            <person name="Ardell D.H."/>
            <person name="Canbaeck B."/>
            <person name="Eriksson A.-S."/>
            <person name="Naeslund A.K."/>
            <person name="Handley S.A."/>
            <person name="Huvet M."/>
            <person name="La Scola B."/>
            <person name="Holmberg M."/>
            <person name="Andersson S.G.E."/>
        </authorList>
    </citation>
    <scope>NUCLEOTIDE SEQUENCE [LARGE SCALE GENOMIC DNA]</scope>
    <source>
        <strain>Toulouse</strain>
    </source>
</reference>
<keyword id="KW-0963">Cytoplasm</keyword>
<keyword id="KW-0269">Exonuclease</keyword>
<keyword id="KW-0378">Hydrolase</keyword>
<keyword id="KW-0540">Nuclease</keyword>
<comment type="function">
    <text evidence="1">Bidirectionally degrades single-stranded DNA into large acid-insoluble oligonucleotides, which are then degraded further into small acid-soluble oligonucleotides.</text>
</comment>
<comment type="catalytic activity">
    <reaction evidence="1">
        <text>Exonucleolytic cleavage in either 5'- to 3'- or 3'- to 5'-direction to yield nucleoside 5'-phosphates.</text>
        <dbReference type="EC" id="3.1.11.6"/>
    </reaction>
</comment>
<comment type="subunit">
    <text evidence="1">Heterooligomer composed of large and small subunits.</text>
</comment>
<comment type="subcellular location">
    <subcellularLocation>
        <location evidence="1">Cytoplasm</location>
    </subcellularLocation>
</comment>
<comment type="similarity">
    <text evidence="1">Belongs to the XseA family.</text>
</comment>
<dbReference type="EC" id="3.1.11.6" evidence="1"/>
<dbReference type="EMBL" id="BX897700">
    <property type="protein sequence ID" value="CAF26437.1"/>
    <property type="molecule type" value="Genomic_DNA"/>
</dbReference>
<dbReference type="SMR" id="Q6FZ30"/>
<dbReference type="KEGG" id="bqu:BQ09610"/>
<dbReference type="eggNOG" id="COG1570">
    <property type="taxonomic scope" value="Bacteria"/>
</dbReference>
<dbReference type="HOGENOM" id="CLU_023625_3_1_5"/>
<dbReference type="Proteomes" id="UP000000597">
    <property type="component" value="Chromosome"/>
</dbReference>
<dbReference type="GO" id="GO:0005737">
    <property type="term" value="C:cytoplasm"/>
    <property type="evidence" value="ECO:0007669"/>
    <property type="project" value="UniProtKB-SubCell"/>
</dbReference>
<dbReference type="GO" id="GO:0009318">
    <property type="term" value="C:exodeoxyribonuclease VII complex"/>
    <property type="evidence" value="ECO:0007669"/>
    <property type="project" value="InterPro"/>
</dbReference>
<dbReference type="GO" id="GO:0008855">
    <property type="term" value="F:exodeoxyribonuclease VII activity"/>
    <property type="evidence" value="ECO:0007669"/>
    <property type="project" value="UniProtKB-UniRule"/>
</dbReference>
<dbReference type="GO" id="GO:0003676">
    <property type="term" value="F:nucleic acid binding"/>
    <property type="evidence" value="ECO:0007669"/>
    <property type="project" value="InterPro"/>
</dbReference>
<dbReference type="GO" id="GO:0006308">
    <property type="term" value="P:DNA catabolic process"/>
    <property type="evidence" value="ECO:0007669"/>
    <property type="project" value="UniProtKB-UniRule"/>
</dbReference>
<dbReference type="CDD" id="cd04489">
    <property type="entry name" value="ExoVII_LU_OBF"/>
    <property type="match status" value="1"/>
</dbReference>
<dbReference type="HAMAP" id="MF_00378">
    <property type="entry name" value="Exonuc_7_L"/>
    <property type="match status" value="1"/>
</dbReference>
<dbReference type="InterPro" id="IPR003753">
    <property type="entry name" value="Exonuc_VII_L"/>
</dbReference>
<dbReference type="InterPro" id="IPR020579">
    <property type="entry name" value="Exonuc_VII_lsu_C"/>
</dbReference>
<dbReference type="InterPro" id="IPR025824">
    <property type="entry name" value="OB-fold_nuc-bd_dom"/>
</dbReference>
<dbReference type="NCBIfam" id="TIGR00237">
    <property type="entry name" value="xseA"/>
    <property type="match status" value="1"/>
</dbReference>
<dbReference type="PANTHER" id="PTHR30008">
    <property type="entry name" value="EXODEOXYRIBONUCLEASE 7 LARGE SUBUNIT"/>
    <property type="match status" value="1"/>
</dbReference>
<dbReference type="PANTHER" id="PTHR30008:SF0">
    <property type="entry name" value="EXODEOXYRIBONUCLEASE 7 LARGE SUBUNIT"/>
    <property type="match status" value="1"/>
</dbReference>
<dbReference type="Pfam" id="PF02601">
    <property type="entry name" value="Exonuc_VII_L"/>
    <property type="match status" value="1"/>
</dbReference>
<dbReference type="Pfam" id="PF13742">
    <property type="entry name" value="tRNA_anti_2"/>
    <property type="match status" value="1"/>
</dbReference>
<name>EX7L_BARQU</name>
<evidence type="ECO:0000255" key="1">
    <source>
        <dbReference type="HAMAP-Rule" id="MF_00378"/>
    </source>
</evidence>
<evidence type="ECO:0000256" key="2">
    <source>
        <dbReference type="SAM" id="MobiDB-lite"/>
    </source>
</evidence>
<gene>
    <name evidence="1" type="primary">xseA</name>
    <name type="ordered locus">BQ09610</name>
</gene>
<proteinExistence type="inferred from homology"/>
<organism>
    <name type="scientific">Bartonella quintana (strain Toulouse)</name>
    <name type="common">Rochalimaea quintana</name>
    <dbReference type="NCBI Taxonomy" id="283165"/>
    <lineage>
        <taxon>Bacteria</taxon>
        <taxon>Pseudomonadati</taxon>
        <taxon>Pseudomonadota</taxon>
        <taxon>Alphaproteobacteria</taxon>
        <taxon>Hyphomicrobiales</taxon>
        <taxon>Bartonellaceae</taxon>
        <taxon>Bartonella</taxon>
    </lineage>
</organism>
<protein>
    <recommendedName>
        <fullName evidence="1">Exodeoxyribonuclease 7 large subunit</fullName>
        <ecNumber evidence="1">3.1.11.6</ecNumber>
    </recommendedName>
    <alternativeName>
        <fullName evidence="1">Exodeoxyribonuclease VII large subunit</fullName>
        <shortName evidence="1">Exonuclease VII large subunit</shortName>
    </alternativeName>
</protein>
<accession>Q6FZ30</accession>
<feature type="chain" id="PRO_1000122044" description="Exodeoxyribonuclease 7 large subunit">
    <location>
        <begin position="1"/>
        <end position="475"/>
    </location>
</feature>
<feature type="region of interest" description="Disordered" evidence="2">
    <location>
        <begin position="452"/>
        <end position="475"/>
    </location>
</feature>
<feature type="compositionally biased region" description="Basic and acidic residues" evidence="2">
    <location>
        <begin position="466"/>
        <end position="475"/>
    </location>
</feature>
<sequence>MNLFFEKTEATNVAEFSVSEIAGALKRVVEERFGYVRVRGEISGYRGAHASGHVYFSLKDDKARLEAVIWRGIMEKLKFPPEEGMEVIAVGKLTTYPGSSKYQIVIEALEPTGVGALMTLLENRKKKLADEGLFDEAKKKPLPYMPRIIGVVTSPTGAVIRDIIHRISDRFPLHILVWPVRVQGDTSGREVADALKGFNALPFGGLVPKPDLIIVARGGGSLEDLWGFNDEAVVRAVYESALPVISAVGHETDWTLIDYVADWRAPTPTGAAERAVPVKLDLEVQVASLGARLRMGLARYFDFHQQKLRALVRGLPTVDQLFALPRRGFDEISSRLQRALCVSCDKKRFYFHGLNLRLSPRLLNTEKELRNTKEYTARLHRAFVRNVEKQRAQLEVASRLLKSTSYQNILERGFVLALGPDNKLIKRLVQFPETGQINLRFFDGEMSVSARDHGLNRSSKSKRIKSKQDDQGTLF</sequence>